<dbReference type="EC" id="3.2.1.18" evidence="1"/>
<dbReference type="EMBL" id="AY651459">
    <property type="protein sequence ID" value="AAT73341.2"/>
    <property type="molecule type" value="Genomic_RNA"/>
</dbReference>
<dbReference type="SMR" id="Q6DPK0"/>
<dbReference type="CAZy" id="GH34">
    <property type="family name" value="Glycoside Hydrolase Family 34"/>
</dbReference>
<dbReference type="GlyCosmos" id="Q6DPK0">
    <property type="glycosylation" value="4 sites, No reported glycans"/>
</dbReference>
<dbReference type="GO" id="GO:0020002">
    <property type="term" value="C:host cell plasma membrane"/>
    <property type="evidence" value="ECO:0007669"/>
    <property type="project" value="UniProtKB-SubCell"/>
</dbReference>
<dbReference type="GO" id="GO:0016020">
    <property type="term" value="C:membrane"/>
    <property type="evidence" value="ECO:0007669"/>
    <property type="project" value="UniProtKB-UniRule"/>
</dbReference>
<dbReference type="GO" id="GO:0055036">
    <property type="term" value="C:virion membrane"/>
    <property type="evidence" value="ECO:0007669"/>
    <property type="project" value="UniProtKB-SubCell"/>
</dbReference>
<dbReference type="GO" id="GO:0004308">
    <property type="term" value="F:exo-alpha-sialidase activity"/>
    <property type="evidence" value="ECO:0007669"/>
    <property type="project" value="UniProtKB-UniRule"/>
</dbReference>
<dbReference type="GO" id="GO:0046872">
    <property type="term" value="F:metal ion binding"/>
    <property type="evidence" value="ECO:0007669"/>
    <property type="project" value="UniProtKB-UniRule"/>
</dbReference>
<dbReference type="GO" id="GO:0005975">
    <property type="term" value="P:carbohydrate metabolic process"/>
    <property type="evidence" value="ECO:0007669"/>
    <property type="project" value="InterPro"/>
</dbReference>
<dbReference type="GO" id="GO:0046761">
    <property type="term" value="P:viral budding from plasma membrane"/>
    <property type="evidence" value="ECO:0007669"/>
    <property type="project" value="UniProtKB-UniRule"/>
</dbReference>
<dbReference type="CDD" id="cd15483">
    <property type="entry name" value="Influenza_NA"/>
    <property type="match status" value="1"/>
</dbReference>
<dbReference type="FunFam" id="2.120.10.10:FF:000001">
    <property type="entry name" value="Neuraminidase"/>
    <property type="match status" value="1"/>
</dbReference>
<dbReference type="Gene3D" id="2.120.10.10">
    <property type="match status" value="1"/>
</dbReference>
<dbReference type="HAMAP" id="MF_04071">
    <property type="entry name" value="INFV_NRAM"/>
    <property type="match status" value="1"/>
</dbReference>
<dbReference type="InterPro" id="IPR001860">
    <property type="entry name" value="Glyco_hydro_34"/>
</dbReference>
<dbReference type="InterPro" id="IPR033654">
    <property type="entry name" value="Sialidase_Influenza_A/B"/>
</dbReference>
<dbReference type="InterPro" id="IPR036278">
    <property type="entry name" value="Sialidase_sf"/>
</dbReference>
<dbReference type="Pfam" id="PF00064">
    <property type="entry name" value="Neur"/>
    <property type="match status" value="1"/>
</dbReference>
<dbReference type="SUPFAM" id="SSF50939">
    <property type="entry name" value="Sialidases"/>
    <property type="match status" value="1"/>
</dbReference>
<reference key="1">
    <citation type="journal article" date="2004" name="Nature">
        <title>Genesis of a highly pathogenic and potentially pandemic H5N1 influenza virus in eastern Asia.</title>
        <authorList>
            <person name="Li K.S."/>
            <person name="Guan Y."/>
            <person name="Wang J."/>
            <person name="Smith G.J.D."/>
            <person name="Xu K.M."/>
            <person name="Duan L."/>
            <person name="Rahardjo A.P."/>
            <person name="Puthavathana P."/>
            <person name="Buranathai C."/>
            <person name="Nguyen T.D."/>
            <person name="Estoepangestie A.T.S."/>
            <person name="Chaisingh A."/>
            <person name="Auewarakul P."/>
            <person name="Long H.T."/>
            <person name="Hanh N.T.H."/>
            <person name="Webby R.J."/>
            <person name="Poon L.L.M."/>
            <person name="Chen H."/>
            <person name="Shortridge K.F."/>
            <person name="Yuen K.Y."/>
            <person name="Webster R.G."/>
            <person name="Peiris J.S.M."/>
        </authorList>
    </citation>
    <scope>NUCLEOTIDE SEQUENCE [GENOMIC RNA]</scope>
</reference>
<reference key="2">
    <citation type="submission" date="2008-03" db="EMBL/GenBank/DDBJ databases">
        <authorList>
            <person name="Li K.S."/>
            <person name="Guan Y."/>
            <person name="Wang J."/>
            <person name="Smith G.J.D."/>
            <person name="Xu K.M."/>
            <person name="Duan L."/>
            <person name="Rahardjo A.P."/>
            <person name="Puthavathana P."/>
            <person name="Buranathai C."/>
            <person name="Nguyen T.D."/>
            <person name="Estoepangestie A.T.S."/>
            <person name="Chaisingh A."/>
            <person name="Auewarakul P."/>
            <person name="Long H.T."/>
            <person name="Hanh N.T.H."/>
            <person name="Lim W."/>
            <person name="Webby R.J."/>
            <person name="Poon L.L.M."/>
            <person name="Chen H."/>
            <person name="Shortridge K.F."/>
            <person name="Yuen K.Y."/>
            <person name="Webster R.G."/>
            <person name="Peiris J.S.M."/>
        </authorList>
    </citation>
    <scope>SEQUENCE REVISION</scope>
</reference>
<name>NRAM_I02A3</name>
<proteinExistence type="inferred from homology"/>
<keyword id="KW-0106">Calcium</keyword>
<keyword id="KW-1015">Disulfide bond</keyword>
<keyword id="KW-0325">Glycoprotein</keyword>
<keyword id="KW-0326">Glycosidase</keyword>
<keyword id="KW-1032">Host cell membrane</keyword>
<keyword id="KW-1043">Host membrane</keyword>
<keyword id="KW-0378">Hydrolase</keyword>
<keyword id="KW-0472">Membrane</keyword>
<keyword id="KW-0479">Metal-binding</keyword>
<keyword id="KW-0735">Signal-anchor</keyword>
<keyword id="KW-0812">Transmembrane</keyword>
<keyword id="KW-1133">Transmembrane helix</keyword>
<keyword id="KW-0946">Virion</keyword>
<feature type="chain" id="PRO_0000310936" description="Neuraminidase">
    <location>
        <begin position="1"/>
        <end position="449"/>
    </location>
</feature>
<feature type="topological domain" description="Intravirion" evidence="1">
    <location>
        <begin position="1"/>
        <end position="6"/>
    </location>
</feature>
<feature type="transmembrane region" description="Helical" evidence="1">
    <location>
        <begin position="7"/>
        <end position="27"/>
    </location>
</feature>
<feature type="topological domain" description="Virion surface" evidence="1">
    <location>
        <begin position="28"/>
        <end position="449"/>
    </location>
</feature>
<feature type="region of interest" description="Involved in apical transport and lipid raft association" evidence="1">
    <location>
        <begin position="11"/>
        <end position="33"/>
    </location>
</feature>
<feature type="region of interest" description="Hypervariable stalk region" evidence="1">
    <location>
        <begin position="36"/>
        <end position="70"/>
    </location>
</feature>
<feature type="region of interest" description="Head of neuraminidase" evidence="1">
    <location>
        <begin position="71"/>
        <end position="449"/>
    </location>
</feature>
<feature type="active site" description="Proton donor/acceptor" evidence="1">
    <location>
        <position position="131"/>
    </location>
</feature>
<feature type="active site" description="Nucleophile" evidence="1">
    <location>
        <position position="382"/>
    </location>
</feature>
<feature type="binding site" evidence="1">
    <location>
        <position position="98"/>
    </location>
    <ligand>
        <name>substrate</name>
    </ligand>
</feature>
<feature type="binding site" evidence="1">
    <location>
        <position position="132"/>
    </location>
    <ligand>
        <name>substrate</name>
    </ligand>
</feature>
<feature type="binding site" evidence="1">
    <location>
        <begin position="257"/>
        <end position="258"/>
    </location>
    <ligand>
        <name>substrate</name>
    </ligand>
</feature>
<feature type="binding site" evidence="1">
    <location>
        <position position="273"/>
    </location>
    <ligand>
        <name>substrate</name>
    </ligand>
</feature>
<feature type="binding site" evidence="1">
    <location>
        <position position="274"/>
    </location>
    <ligand>
        <name>Ca(2+)</name>
        <dbReference type="ChEBI" id="CHEBI:29108"/>
    </ligand>
</feature>
<feature type="binding site" evidence="1">
    <location>
        <position position="278"/>
    </location>
    <ligand>
        <name>Ca(2+)</name>
        <dbReference type="ChEBI" id="CHEBI:29108"/>
    </ligand>
</feature>
<feature type="binding site" evidence="1">
    <location>
        <position position="304"/>
    </location>
    <ligand>
        <name>Ca(2+)</name>
        <dbReference type="ChEBI" id="CHEBI:29108"/>
    </ligand>
</feature>
<feature type="binding site" evidence="1">
    <location>
        <position position="348"/>
    </location>
    <ligand>
        <name>substrate</name>
    </ligand>
</feature>
<feature type="glycosylation site" description="N-linked (GlcNAc...) asparagine; by host" evidence="1">
    <location>
        <position position="68"/>
    </location>
</feature>
<feature type="glycosylation site" description="N-linked (GlcNAc...) asparagine; by host" evidence="1">
    <location>
        <position position="126"/>
    </location>
</feature>
<feature type="glycosylation site" description="N-linked (GlcNAc...) asparagine; by host" evidence="1">
    <location>
        <position position="215"/>
    </location>
</feature>
<feature type="glycosylation site" description="N-linked (GlcNAc...) asparagine; by host" evidence="1">
    <location>
        <position position="366"/>
    </location>
</feature>
<feature type="disulfide bond" evidence="1">
    <location>
        <begin position="72"/>
        <end position="397"/>
    </location>
</feature>
<feature type="disulfide bond" evidence="1">
    <location>
        <begin position="104"/>
        <end position="109"/>
    </location>
</feature>
<feature type="disulfide bond" evidence="1">
    <location>
        <begin position="164"/>
        <end position="211"/>
    </location>
</feature>
<feature type="disulfide bond" evidence="1">
    <location>
        <begin position="213"/>
        <end position="218"/>
    </location>
</feature>
<feature type="disulfide bond" evidence="1">
    <location>
        <begin position="259"/>
        <end position="272"/>
    </location>
</feature>
<feature type="disulfide bond" evidence="1">
    <location>
        <begin position="261"/>
        <end position="270"/>
    </location>
</feature>
<feature type="disulfide bond" evidence="1">
    <location>
        <begin position="298"/>
        <end position="315"/>
    </location>
</feature>
<feature type="disulfide bond" evidence="1">
    <location>
        <begin position="401"/>
        <end position="426"/>
    </location>
</feature>
<gene>
    <name evidence="1" type="primary">NA</name>
</gene>
<accession>Q6DPK0</accession>
<protein>
    <recommendedName>
        <fullName evidence="1">Neuraminidase</fullName>
        <ecNumber evidence="1">3.2.1.18</ecNumber>
    </recommendedName>
</protein>
<organism>
    <name type="scientific">Influenza A virus (strain A/Chicken/Hong Kong/37.4/2002 H5N1 genotype X2)</name>
    <dbReference type="NCBI Taxonomy" id="284172"/>
    <lineage>
        <taxon>Viruses</taxon>
        <taxon>Riboviria</taxon>
        <taxon>Orthornavirae</taxon>
        <taxon>Negarnaviricota</taxon>
        <taxon>Polyploviricotina</taxon>
        <taxon>Insthoviricetes</taxon>
        <taxon>Articulavirales</taxon>
        <taxon>Orthomyxoviridae</taxon>
        <taxon>Alphainfluenzavirus</taxon>
        <taxon>Alphainfluenzavirus influenzae</taxon>
        <taxon>Influenza A virus</taxon>
    </lineage>
</organism>
<evidence type="ECO:0000255" key="1">
    <source>
        <dbReference type="HAMAP-Rule" id="MF_04071"/>
    </source>
</evidence>
<sequence>MNPNRKIITIGSICMVIGIVSLMLQIGNIISIWVSHSIQTENHHQAEPISNTNFLTEKAVASVTLAGNSSLCPISGWAIHSKDNGIRIGSKGDVFVIREPFISCSHLECRTFFLTQGALLNDKHSNGTAKDRSPHRTLMSCPVGEAPSPYNSRFESVAWSASACHDGTSWLTIAISGPDNGAVAVLKYNGIITDTIKSWRNNILRTQESECACVNGSCFTVMTDGPSNGQASYKIFKMEKGKVVKSVELDAPNYHYEECSCYPDAGEVTCVCRDNWHGSNRPWVSFNQNLEYQIGYICSGVFGDNPRPNDGTGSCGPMSLNGAYGVKGFSFKYGNGVWIGRTKSTNSRSGFEMIWDPNGWTGTDSNFSVKQDIVAITDWSGYSGSFVQHPELTGLDCIRPCFWVELIRGRPKESTIWTSGSSISFCGVNSDTVGWSWPDGAELPFTIDK</sequence>
<comment type="function">
    <text evidence="1">Catalyzes the removal of terminal sialic acid residues from viral and cellular glycoconjugates. Cleaves off the terminal sialic acids on the glycosylated HA during virus budding to facilitate virus release. Additionally helps virus spread through the circulation by further removing sialic acids from the cell surface. These cleavages prevent self-aggregation and ensure the efficient spread of the progeny virus from cell to cell. Otherwise, infection would be limited to one round of replication. Described as a receptor-destroying enzyme because it cleaves a terminal sialic acid from the cellular receptors. May facilitate viral invasion of the upper airways by cleaving the sialic acid moieties on the mucin of the airway epithelial cells. Likely to plays a role in the budding process through its association with lipid rafts during intracellular transport. May additionally display a raft-association independent effect on budding. Plays a role in the determination of host range restriction on replication and virulence. Sialidase activity in late endosome/lysosome traffic seems to enhance virus replication.</text>
</comment>
<comment type="catalytic activity">
    <reaction evidence="1">
        <text>Hydrolysis of alpha-(2-&gt;3)-, alpha-(2-&gt;6)-, alpha-(2-&gt;8)- glycosidic linkages of terminal sialic acid residues in oligosaccharides, glycoproteins, glycolipids, colominic acid and synthetic substrates.</text>
        <dbReference type="EC" id="3.2.1.18"/>
    </reaction>
</comment>
<comment type="cofactor">
    <cofactor evidence="1">
        <name>Ca(2+)</name>
        <dbReference type="ChEBI" id="CHEBI:29108"/>
    </cofactor>
</comment>
<comment type="activity regulation">
    <text evidence="1">Inhibited by the neuraminidase inhibitors zanamivir (Relenza) and oseltamivir (Tamiflu). These drugs interfere with the release of progeny virus from infected cells and are effective against all influenza strains. Resistance to neuraminidase inhibitors is quite rare.</text>
</comment>
<comment type="subunit">
    <text evidence="1">Homotetramer.</text>
</comment>
<comment type="subcellular location">
    <subcellularLocation>
        <location evidence="1">Virion membrane</location>
    </subcellularLocation>
    <subcellularLocation>
        <location evidence="1">Host apical cell membrane</location>
        <topology evidence="1">Single-pass type II membrane protein</topology>
    </subcellularLocation>
    <text evidence="1">Preferentially accumulates at the apical plasma membrane in infected polarized epithelial cells, which is the virus assembly site. Uses lipid rafts for cell surface transport and apical sorting. In the virion, forms a mushroom-shaped spike on the surface of the membrane.</text>
</comment>
<comment type="domain">
    <text evidence="1">Intact N-terminus is essential for virion morphogenesis. Possesses two apical sorting signals, one in the ectodomain, which is likely to be a glycan, and the other in the transmembrane domain. The transmembrane domain also plays a role in lipid raft association.</text>
</comment>
<comment type="PTM">
    <text evidence="1">N-glycosylated.</text>
</comment>
<comment type="miscellaneous">
    <text>The influenza A genome consist of 8 RNA segments. Genetic variation of hemagglutinin and/or neuraminidase genes results in the emergence of new influenza strains. The mechanism of variation can be the result of point mutations or the result of genetic reassortment between segments of two different strains.</text>
</comment>
<comment type="similarity">
    <text evidence="1">Belongs to the glycosyl hydrolase 34 family.</text>
</comment>
<organismHost>
    <name type="scientific">Aves</name>
    <dbReference type="NCBI Taxonomy" id="8782"/>
</organismHost>
<organismHost>
    <name type="scientific">Felis catus</name>
    <name type="common">Cat</name>
    <name type="synonym">Felis silvestris catus</name>
    <dbReference type="NCBI Taxonomy" id="9685"/>
</organismHost>
<organismHost>
    <name type="scientific">Homo sapiens</name>
    <name type="common">Human</name>
    <dbReference type="NCBI Taxonomy" id="9606"/>
</organismHost>
<organismHost>
    <name type="scientific">Panthera pardus</name>
    <name type="common">Leopard</name>
    <name type="synonym">Felis pardus</name>
    <dbReference type="NCBI Taxonomy" id="9691"/>
</organismHost>
<organismHost>
    <name type="scientific">Panthera tigris</name>
    <name type="common">Tiger</name>
    <dbReference type="NCBI Taxonomy" id="9694"/>
</organismHost>
<organismHost>
    <name type="scientific">Sus scrofa</name>
    <name type="common">Pig</name>
    <dbReference type="NCBI Taxonomy" id="9823"/>
</organismHost>